<gene>
    <name evidence="1" type="primary">nuoB</name>
    <name type="ordered locus">Dtpsy_0873</name>
</gene>
<comment type="function">
    <text evidence="1">NDH-1 shuttles electrons from NADH, via FMN and iron-sulfur (Fe-S) centers, to quinones in the respiratory chain. The immediate electron acceptor for the enzyme in this species is believed to be ubiquinone. Couples the redox reaction to proton translocation (for every two electrons transferred, four hydrogen ions are translocated across the cytoplasmic membrane), and thus conserves the redox energy in a proton gradient.</text>
</comment>
<comment type="catalytic activity">
    <reaction evidence="1">
        <text>a quinone + NADH + 5 H(+)(in) = a quinol + NAD(+) + 4 H(+)(out)</text>
        <dbReference type="Rhea" id="RHEA:57888"/>
        <dbReference type="ChEBI" id="CHEBI:15378"/>
        <dbReference type="ChEBI" id="CHEBI:24646"/>
        <dbReference type="ChEBI" id="CHEBI:57540"/>
        <dbReference type="ChEBI" id="CHEBI:57945"/>
        <dbReference type="ChEBI" id="CHEBI:132124"/>
    </reaction>
</comment>
<comment type="cofactor">
    <cofactor evidence="1">
        <name>[4Fe-4S] cluster</name>
        <dbReference type="ChEBI" id="CHEBI:49883"/>
    </cofactor>
    <text evidence="1">Binds 1 [4Fe-4S] cluster.</text>
</comment>
<comment type="subunit">
    <text evidence="1">NDH-1 is composed of 14 different subunits. Subunits NuoB, C, D, E, F, and G constitute the peripheral sector of the complex.</text>
</comment>
<comment type="subcellular location">
    <subcellularLocation>
        <location evidence="1">Cell inner membrane</location>
        <topology evidence="1">Peripheral membrane protein</topology>
        <orientation evidence="1">Cytoplasmic side</orientation>
    </subcellularLocation>
</comment>
<comment type="similarity">
    <text evidence="1">Belongs to the complex I 20 kDa subunit family.</text>
</comment>
<dbReference type="EC" id="7.1.1.-" evidence="1"/>
<dbReference type="EMBL" id="CP001392">
    <property type="protein sequence ID" value="ACM32351.1"/>
    <property type="molecule type" value="Genomic_DNA"/>
</dbReference>
<dbReference type="RefSeq" id="WP_011804399.1">
    <property type="nucleotide sequence ID" value="NC_011992.1"/>
</dbReference>
<dbReference type="SMR" id="B9MEL5"/>
<dbReference type="KEGG" id="dia:Dtpsy_0873"/>
<dbReference type="eggNOG" id="COG0377">
    <property type="taxonomic scope" value="Bacteria"/>
</dbReference>
<dbReference type="HOGENOM" id="CLU_055737_7_3_4"/>
<dbReference type="Proteomes" id="UP000000450">
    <property type="component" value="Chromosome"/>
</dbReference>
<dbReference type="GO" id="GO:0005886">
    <property type="term" value="C:plasma membrane"/>
    <property type="evidence" value="ECO:0007669"/>
    <property type="project" value="UniProtKB-SubCell"/>
</dbReference>
<dbReference type="GO" id="GO:0045271">
    <property type="term" value="C:respiratory chain complex I"/>
    <property type="evidence" value="ECO:0007669"/>
    <property type="project" value="TreeGrafter"/>
</dbReference>
<dbReference type="GO" id="GO:0051539">
    <property type="term" value="F:4 iron, 4 sulfur cluster binding"/>
    <property type="evidence" value="ECO:0007669"/>
    <property type="project" value="UniProtKB-KW"/>
</dbReference>
<dbReference type="GO" id="GO:0005506">
    <property type="term" value="F:iron ion binding"/>
    <property type="evidence" value="ECO:0007669"/>
    <property type="project" value="UniProtKB-UniRule"/>
</dbReference>
<dbReference type="GO" id="GO:0008137">
    <property type="term" value="F:NADH dehydrogenase (ubiquinone) activity"/>
    <property type="evidence" value="ECO:0007669"/>
    <property type="project" value="InterPro"/>
</dbReference>
<dbReference type="GO" id="GO:0050136">
    <property type="term" value="F:NADH:ubiquinone reductase (non-electrogenic) activity"/>
    <property type="evidence" value="ECO:0007669"/>
    <property type="project" value="UniProtKB-UniRule"/>
</dbReference>
<dbReference type="GO" id="GO:0048038">
    <property type="term" value="F:quinone binding"/>
    <property type="evidence" value="ECO:0007669"/>
    <property type="project" value="UniProtKB-KW"/>
</dbReference>
<dbReference type="GO" id="GO:0009060">
    <property type="term" value="P:aerobic respiration"/>
    <property type="evidence" value="ECO:0007669"/>
    <property type="project" value="TreeGrafter"/>
</dbReference>
<dbReference type="GO" id="GO:0015990">
    <property type="term" value="P:electron transport coupled proton transport"/>
    <property type="evidence" value="ECO:0007669"/>
    <property type="project" value="TreeGrafter"/>
</dbReference>
<dbReference type="FunFam" id="3.40.50.12280:FF:000001">
    <property type="entry name" value="NADH-quinone oxidoreductase subunit B 2"/>
    <property type="match status" value="1"/>
</dbReference>
<dbReference type="Gene3D" id="3.40.50.12280">
    <property type="match status" value="1"/>
</dbReference>
<dbReference type="HAMAP" id="MF_01356">
    <property type="entry name" value="NDH1_NuoB"/>
    <property type="match status" value="1"/>
</dbReference>
<dbReference type="InterPro" id="IPR006137">
    <property type="entry name" value="NADH_UbQ_OxRdtase-like_20kDa"/>
</dbReference>
<dbReference type="InterPro" id="IPR006138">
    <property type="entry name" value="NADH_UQ_OxRdtase_20Kd_su"/>
</dbReference>
<dbReference type="NCBIfam" id="TIGR01957">
    <property type="entry name" value="nuoB_fam"/>
    <property type="match status" value="1"/>
</dbReference>
<dbReference type="NCBIfam" id="NF005012">
    <property type="entry name" value="PRK06411.1"/>
    <property type="match status" value="1"/>
</dbReference>
<dbReference type="PANTHER" id="PTHR11995">
    <property type="entry name" value="NADH DEHYDROGENASE"/>
    <property type="match status" value="1"/>
</dbReference>
<dbReference type="PANTHER" id="PTHR11995:SF14">
    <property type="entry name" value="NADH DEHYDROGENASE [UBIQUINONE] IRON-SULFUR PROTEIN 7, MITOCHONDRIAL"/>
    <property type="match status" value="1"/>
</dbReference>
<dbReference type="Pfam" id="PF01058">
    <property type="entry name" value="Oxidored_q6"/>
    <property type="match status" value="1"/>
</dbReference>
<dbReference type="SUPFAM" id="SSF56770">
    <property type="entry name" value="HydA/Nqo6-like"/>
    <property type="match status" value="1"/>
</dbReference>
<dbReference type="PROSITE" id="PS01150">
    <property type="entry name" value="COMPLEX1_20K"/>
    <property type="match status" value="1"/>
</dbReference>
<feature type="chain" id="PRO_0000376200" description="NADH-quinone oxidoreductase subunit B">
    <location>
        <begin position="1"/>
        <end position="159"/>
    </location>
</feature>
<feature type="binding site" evidence="1">
    <location>
        <position position="36"/>
    </location>
    <ligand>
        <name>[4Fe-4S] cluster</name>
        <dbReference type="ChEBI" id="CHEBI:49883"/>
    </ligand>
</feature>
<feature type="binding site" evidence="1">
    <location>
        <position position="37"/>
    </location>
    <ligand>
        <name>[4Fe-4S] cluster</name>
        <dbReference type="ChEBI" id="CHEBI:49883"/>
    </ligand>
</feature>
<feature type="binding site" evidence="1">
    <location>
        <position position="102"/>
    </location>
    <ligand>
        <name>[4Fe-4S] cluster</name>
        <dbReference type="ChEBI" id="CHEBI:49883"/>
    </ligand>
</feature>
<feature type="binding site" evidence="1">
    <location>
        <position position="132"/>
    </location>
    <ligand>
        <name>[4Fe-4S] cluster</name>
        <dbReference type="ChEBI" id="CHEBI:49883"/>
    </ligand>
</feature>
<name>NUOB_ACIET</name>
<protein>
    <recommendedName>
        <fullName evidence="1">NADH-quinone oxidoreductase subunit B</fullName>
        <ecNumber evidence="1">7.1.1.-</ecNumber>
    </recommendedName>
    <alternativeName>
        <fullName evidence="1">NADH dehydrogenase I subunit B</fullName>
    </alternativeName>
    <alternativeName>
        <fullName evidence="1">NDH-1 subunit B</fullName>
    </alternativeName>
</protein>
<accession>B9MEL5</accession>
<keyword id="KW-0004">4Fe-4S</keyword>
<keyword id="KW-0997">Cell inner membrane</keyword>
<keyword id="KW-1003">Cell membrane</keyword>
<keyword id="KW-0408">Iron</keyword>
<keyword id="KW-0411">Iron-sulfur</keyword>
<keyword id="KW-0472">Membrane</keyword>
<keyword id="KW-0479">Metal-binding</keyword>
<keyword id="KW-0520">NAD</keyword>
<keyword id="KW-0874">Quinone</keyword>
<keyword id="KW-1185">Reference proteome</keyword>
<keyword id="KW-1278">Translocase</keyword>
<keyword id="KW-0813">Transport</keyword>
<keyword id="KW-0830">Ubiquinone</keyword>
<evidence type="ECO:0000255" key="1">
    <source>
        <dbReference type="HAMAP-Rule" id="MF_01356"/>
    </source>
</evidence>
<organism>
    <name type="scientific">Acidovorax ebreus (strain TPSY)</name>
    <name type="common">Diaphorobacter sp. (strain TPSY)</name>
    <dbReference type="NCBI Taxonomy" id="535289"/>
    <lineage>
        <taxon>Bacteria</taxon>
        <taxon>Pseudomonadati</taxon>
        <taxon>Pseudomonadota</taxon>
        <taxon>Betaproteobacteria</taxon>
        <taxon>Burkholderiales</taxon>
        <taxon>Comamonadaceae</taxon>
        <taxon>Diaphorobacter</taxon>
    </lineage>
</organism>
<sequence>MIEGVMKEGFITTSYDSVVNWAKTGSLWPMTFGLACCAVEMMHAAAARYDLGRFGAEVFRASPRQSDLMIVAGTLCNKMAPALRKVYDQMAEPRWVISMGSCANGGGYYHYSYSVVRGCDRIVPVDVYVPGCPPTAEALIYGIIQLQQKIRRTHTIARA</sequence>
<proteinExistence type="inferred from homology"/>
<reference key="1">
    <citation type="submission" date="2009-01" db="EMBL/GenBank/DDBJ databases">
        <title>Complete sequence of Diaphorobacter sp. TPSY.</title>
        <authorList>
            <consortium name="US DOE Joint Genome Institute"/>
            <person name="Lucas S."/>
            <person name="Copeland A."/>
            <person name="Lapidus A."/>
            <person name="Glavina del Rio T."/>
            <person name="Tice H."/>
            <person name="Bruce D."/>
            <person name="Goodwin L."/>
            <person name="Pitluck S."/>
            <person name="Chertkov O."/>
            <person name="Brettin T."/>
            <person name="Detter J.C."/>
            <person name="Han C."/>
            <person name="Larimer F."/>
            <person name="Land M."/>
            <person name="Hauser L."/>
            <person name="Kyrpides N."/>
            <person name="Mikhailova N."/>
            <person name="Coates J.D."/>
        </authorList>
    </citation>
    <scope>NUCLEOTIDE SEQUENCE [LARGE SCALE GENOMIC DNA]</scope>
    <source>
        <strain>TPSY</strain>
    </source>
</reference>